<sequence>MNGFTVVIPARMASSRLPGKPLADIAGKPMVVRVAEQAAKSRAARVVVATDHADILAACAAHGVEAVLTREDHASGTDRLAEVAAKLALPDDALVVNVQGDEPLIQPELINRLAELLAGADAPVATLAHALHDAADHFNPNVVKVALDKHGRALYFSRAPIPYARDAYAADRSALPAGLPVYRHIGMYGYRAGFLAAYAGLEPGPLEQYEALEQLRVLWHGYGIAVALADEAPAAGVDTPEDLERVRRLFA</sequence>
<feature type="chain" id="PRO_0000370048" description="3-deoxy-manno-octulosonate cytidylyltransferase">
    <location>
        <begin position="1"/>
        <end position="251"/>
    </location>
</feature>
<organism>
    <name type="scientific">Chromobacterium violaceum (strain ATCC 12472 / DSM 30191 / JCM 1249 / CCUG 213 / NBRC 12614 / NCIMB 9131 / NCTC 9757 / MK)</name>
    <dbReference type="NCBI Taxonomy" id="243365"/>
    <lineage>
        <taxon>Bacteria</taxon>
        <taxon>Pseudomonadati</taxon>
        <taxon>Pseudomonadota</taxon>
        <taxon>Betaproteobacteria</taxon>
        <taxon>Neisseriales</taxon>
        <taxon>Chromobacteriaceae</taxon>
        <taxon>Chromobacterium</taxon>
    </lineage>
</organism>
<reference key="1">
    <citation type="journal article" date="2003" name="Proc. Natl. Acad. Sci. U.S.A.">
        <title>The complete genome sequence of Chromobacterium violaceum reveals remarkable and exploitable bacterial adaptability.</title>
        <authorList>
            <person name="Vasconcelos A.T.R."/>
            <person name="de Almeida D.F."/>
            <person name="Hungria M."/>
            <person name="Guimaraes C.T."/>
            <person name="Antonio R.V."/>
            <person name="Almeida F.C."/>
            <person name="de Almeida L.G.P."/>
            <person name="de Almeida R."/>
            <person name="Alves-Gomes J.A."/>
            <person name="Andrade E.M."/>
            <person name="Araripe J."/>
            <person name="de Araujo M.F.F."/>
            <person name="Astolfi-Filho S."/>
            <person name="Azevedo V."/>
            <person name="Baptista A.J."/>
            <person name="Bataus L.A.M."/>
            <person name="Batista J.S."/>
            <person name="Belo A."/>
            <person name="van den Berg C."/>
            <person name="Bogo M."/>
            <person name="Bonatto S."/>
            <person name="Bordignon J."/>
            <person name="Brigido M.M."/>
            <person name="Brito C.A."/>
            <person name="Brocchi M."/>
            <person name="Burity H.A."/>
            <person name="Camargo A.A."/>
            <person name="Cardoso D.D.P."/>
            <person name="Carneiro N.P."/>
            <person name="Carraro D.M."/>
            <person name="Carvalho C.M.B."/>
            <person name="Cascardo J.C.M."/>
            <person name="Cavada B.S."/>
            <person name="Chueire L.M.O."/>
            <person name="Creczynski-Pasa T.B."/>
            <person name="Cunha-Junior N.C."/>
            <person name="Fagundes N."/>
            <person name="Falcao C.L."/>
            <person name="Fantinatti F."/>
            <person name="Farias I.P."/>
            <person name="Felipe M.S.S."/>
            <person name="Ferrari L.P."/>
            <person name="Ferro J.A."/>
            <person name="Ferro M.I.T."/>
            <person name="Franco G.R."/>
            <person name="Freitas N.S.A."/>
            <person name="Furlan L.R."/>
            <person name="Gazzinelli R.T."/>
            <person name="Gomes E.A."/>
            <person name="Goncalves P.R."/>
            <person name="Grangeiro T.B."/>
            <person name="Grattapaglia D."/>
            <person name="Grisard E.C."/>
            <person name="Hanna E.S."/>
            <person name="Jardim S.N."/>
            <person name="Laurino J."/>
            <person name="Leoi L.C.T."/>
            <person name="Lima L.F.A."/>
            <person name="Loureiro M.F."/>
            <person name="Lyra M.C.C.P."/>
            <person name="Madeira H.M.F."/>
            <person name="Manfio G.P."/>
            <person name="Maranhao A.Q."/>
            <person name="Martins W.S."/>
            <person name="di Mauro S.M.Z."/>
            <person name="de Medeiros S.R.B."/>
            <person name="Meissner R.V."/>
            <person name="Moreira M.A.M."/>
            <person name="Nascimento F.F."/>
            <person name="Nicolas M.F."/>
            <person name="Oliveira J.G."/>
            <person name="Oliveira S.C."/>
            <person name="Paixao R.F.C."/>
            <person name="Parente J.A."/>
            <person name="Pedrosa F.O."/>
            <person name="Pena S.D.J."/>
            <person name="Pereira J.O."/>
            <person name="Pereira M."/>
            <person name="Pinto L.S.R.C."/>
            <person name="Pinto L.S."/>
            <person name="Porto J.I.R."/>
            <person name="Potrich D.P."/>
            <person name="Ramalho-Neto C.E."/>
            <person name="Reis A.M.M."/>
            <person name="Rigo L.U."/>
            <person name="Rondinelli E."/>
            <person name="Santos E.B.P."/>
            <person name="Santos F.R."/>
            <person name="Schneider M.P.C."/>
            <person name="Seuanez H.N."/>
            <person name="Silva A.M.R."/>
            <person name="da Silva A.L.C."/>
            <person name="Silva D.W."/>
            <person name="Silva R."/>
            <person name="Simoes I.C."/>
            <person name="Simon D."/>
            <person name="Soares C.M.A."/>
            <person name="Soares R.B.A."/>
            <person name="Souza E.M."/>
            <person name="Souza K.R.L."/>
            <person name="Souza R.C."/>
            <person name="Steffens M.B.R."/>
            <person name="Steindel M."/>
            <person name="Teixeira S.R."/>
            <person name="Urmenyi T."/>
            <person name="Vettore A."/>
            <person name="Wassem R."/>
            <person name="Zaha A."/>
            <person name="Simpson A.J.G."/>
        </authorList>
    </citation>
    <scope>NUCLEOTIDE SEQUENCE [LARGE SCALE GENOMIC DNA]</scope>
    <source>
        <strain>ATCC 12472 / DSM 30191 / JCM 1249 / CCUG 213 / NBRC 12614 / NCIMB 9131 / NCTC 9757 / MK</strain>
    </source>
</reference>
<evidence type="ECO:0000255" key="1">
    <source>
        <dbReference type="HAMAP-Rule" id="MF_00057"/>
    </source>
</evidence>
<gene>
    <name evidence="1" type="primary">kdsB</name>
    <name type="ordered locus">CV_3344</name>
</gene>
<comment type="function">
    <text evidence="1">Activates KDO (a required 8-carbon sugar) for incorporation into bacterial lipopolysaccharide in Gram-negative bacteria.</text>
</comment>
<comment type="catalytic activity">
    <reaction evidence="1">
        <text>3-deoxy-alpha-D-manno-oct-2-ulosonate + CTP = CMP-3-deoxy-beta-D-manno-octulosonate + diphosphate</text>
        <dbReference type="Rhea" id="RHEA:23448"/>
        <dbReference type="ChEBI" id="CHEBI:33019"/>
        <dbReference type="ChEBI" id="CHEBI:37563"/>
        <dbReference type="ChEBI" id="CHEBI:85986"/>
        <dbReference type="ChEBI" id="CHEBI:85987"/>
        <dbReference type="EC" id="2.7.7.38"/>
    </reaction>
</comment>
<comment type="pathway">
    <text evidence="1">Nucleotide-sugar biosynthesis; CMP-3-deoxy-D-manno-octulosonate biosynthesis; CMP-3-deoxy-D-manno-octulosonate from 3-deoxy-D-manno-octulosonate and CTP: step 1/1.</text>
</comment>
<comment type="pathway">
    <text evidence="1">Bacterial outer membrane biogenesis; lipopolysaccharide biosynthesis.</text>
</comment>
<comment type="subcellular location">
    <subcellularLocation>
        <location evidence="1">Cytoplasm</location>
    </subcellularLocation>
</comment>
<comment type="similarity">
    <text evidence="1">Belongs to the KdsB family.</text>
</comment>
<proteinExistence type="inferred from homology"/>
<keyword id="KW-0963">Cytoplasm</keyword>
<keyword id="KW-0448">Lipopolysaccharide biosynthesis</keyword>
<keyword id="KW-0548">Nucleotidyltransferase</keyword>
<keyword id="KW-1185">Reference proteome</keyword>
<keyword id="KW-0808">Transferase</keyword>
<accession>Q7NSS6</accession>
<dbReference type="EC" id="2.7.7.38" evidence="1"/>
<dbReference type="EMBL" id="AE016825">
    <property type="protein sequence ID" value="AAQ61008.1"/>
    <property type="molecule type" value="Genomic_DNA"/>
</dbReference>
<dbReference type="RefSeq" id="WP_011136891.1">
    <property type="nucleotide sequence ID" value="NC_005085.1"/>
</dbReference>
<dbReference type="SMR" id="Q7NSS6"/>
<dbReference type="STRING" id="243365.CV_3344"/>
<dbReference type="GeneID" id="66364566"/>
<dbReference type="KEGG" id="cvi:CV_3344"/>
<dbReference type="eggNOG" id="COG1212">
    <property type="taxonomic scope" value="Bacteria"/>
</dbReference>
<dbReference type="HOGENOM" id="CLU_065038_1_0_4"/>
<dbReference type="OrthoDB" id="9815559at2"/>
<dbReference type="UniPathway" id="UPA00030"/>
<dbReference type="UniPathway" id="UPA00358">
    <property type="reaction ID" value="UER00476"/>
</dbReference>
<dbReference type="Proteomes" id="UP000001424">
    <property type="component" value="Chromosome"/>
</dbReference>
<dbReference type="GO" id="GO:0005829">
    <property type="term" value="C:cytosol"/>
    <property type="evidence" value="ECO:0007669"/>
    <property type="project" value="TreeGrafter"/>
</dbReference>
<dbReference type="GO" id="GO:0008690">
    <property type="term" value="F:3-deoxy-manno-octulosonate cytidylyltransferase activity"/>
    <property type="evidence" value="ECO:0007669"/>
    <property type="project" value="UniProtKB-UniRule"/>
</dbReference>
<dbReference type="GO" id="GO:0033468">
    <property type="term" value="P:CMP-keto-3-deoxy-D-manno-octulosonic acid biosynthetic process"/>
    <property type="evidence" value="ECO:0007669"/>
    <property type="project" value="UniProtKB-UniRule"/>
</dbReference>
<dbReference type="GO" id="GO:0009103">
    <property type="term" value="P:lipopolysaccharide biosynthetic process"/>
    <property type="evidence" value="ECO:0007669"/>
    <property type="project" value="UniProtKB-UniRule"/>
</dbReference>
<dbReference type="CDD" id="cd02517">
    <property type="entry name" value="CMP-KDO-Synthetase"/>
    <property type="match status" value="1"/>
</dbReference>
<dbReference type="FunFam" id="3.90.550.10:FF:000011">
    <property type="entry name" value="3-deoxy-manno-octulosonate cytidylyltransferase"/>
    <property type="match status" value="1"/>
</dbReference>
<dbReference type="Gene3D" id="3.90.550.10">
    <property type="entry name" value="Spore Coat Polysaccharide Biosynthesis Protein SpsA, Chain A"/>
    <property type="match status" value="1"/>
</dbReference>
<dbReference type="HAMAP" id="MF_00057">
    <property type="entry name" value="KdsB"/>
    <property type="match status" value="1"/>
</dbReference>
<dbReference type="InterPro" id="IPR003329">
    <property type="entry name" value="Cytidylyl_trans"/>
</dbReference>
<dbReference type="InterPro" id="IPR004528">
    <property type="entry name" value="KdsB"/>
</dbReference>
<dbReference type="InterPro" id="IPR029044">
    <property type="entry name" value="Nucleotide-diphossugar_trans"/>
</dbReference>
<dbReference type="NCBIfam" id="TIGR00466">
    <property type="entry name" value="kdsB"/>
    <property type="match status" value="1"/>
</dbReference>
<dbReference type="NCBIfam" id="NF003950">
    <property type="entry name" value="PRK05450.1-3"/>
    <property type="match status" value="1"/>
</dbReference>
<dbReference type="NCBIfam" id="NF003952">
    <property type="entry name" value="PRK05450.1-5"/>
    <property type="match status" value="1"/>
</dbReference>
<dbReference type="NCBIfam" id="NF009905">
    <property type="entry name" value="PRK13368.1"/>
    <property type="match status" value="1"/>
</dbReference>
<dbReference type="PANTHER" id="PTHR42866">
    <property type="entry name" value="3-DEOXY-MANNO-OCTULOSONATE CYTIDYLYLTRANSFERASE"/>
    <property type="match status" value="1"/>
</dbReference>
<dbReference type="PANTHER" id="PTHR42866:SF2">
    <property type="entry name" value="3-DEOXY-MANNO-OCTULOSONATE CYTIDYLYLTRANSFERASE, MITOCHONDRIAL"/>
    <property type="match status" value="1"/>
</dbReference>
<dbReference type="Pfam" id="PF02348">
    <property type="entry name" value="CTP_transf_3"/>
    <property type="match status" value="1"/>
</dbReference>
<dbReference type="SUPFAM" id="SSF53448">
    <property type="entry name" value="Nucleotide-diphospho-sugar transferases"/>
    <property type="match status" value="1"/>
</dbReference>
<name>KDSB_CHRVO</name>
<protein>
    <recommendedName>
        <fullName evidence="1">3-deoxy-manno-octulosonate cytidylyltransferase</fullName>
        <ecNumber evidence="1">2.7.7.38</ecNumber>
    </recommendedName>
    <alternativeName>
        <fullName evidence="1">CMP-2-keto-3-deoxyoctulosonic acid synthase</fullName>
        <shortName evidence="1">CKS</shortName>
        <shortName evidence="1">CMP-KDO synthase</shortName>
    </alternativeName>
</protein>